<protein>
    <recommendedName>
        <fullName evidence="1">HPr kinase/phosphorylase</fullName>
        <shortName evidence="1">HPrK/P</shortName>
        <ecNumber evidence="1">2.7.11.-</ecNumber>
        <ecNumber evidence="1">2.7.4.-</ecNumber>
    </recommendedName>
    <alternativeName>
        <fullName evidence="1">HPr(Ser) kinase/phosphorylase</fullName>
    </alternativeName>
</protein>
<feature type="chain" id="PRO_0000058983" description="HPr kinase/phosphorylase">
    <location>
        <begin position="1"/>
        <end position="310"/>
    </location>
</feature>
<feature type="region of interest" description="Important for the catalytic mechanism of both phosphorylation and dephosphorylation" evidence="1">
    <location>
        <begin position="199"/>
        <end position="208"/>
    </location>
</feature>
<feature type="region of interest" description="Important for the catalytic mechanism of dephosphorylation" evidence="1">
    <location>
        <begin position="262"/>
        <end position="267"/>
    </location>
</feature>
<feature type="active site" evidence="1">
    <location>
        <position position="136"/>
    </location>
</feature>
<feature type="active site" evidence="1">
    <location>
        <position position="157"/>
    </location>
</feature>
<feature type="active site" description="Proton acceptor; for phosphorylation activity. Proton donor; for dephosphorylation activity" evidence="1">
    <location>
        <position position="175"/>
    </location>
</feature>
<feature type="active site" evidence="1">
    <location>
        <position position="241"/>
    </location>
</feature>
<feature type="binding site" evidence="1">
    <location>
        <begin position="151"/>
        <end position="158"/>
    </location>
    <ligand>
        <name>ATP</name>
        <dbReference type="ChEBI" id="CHEBI:30616"/>
    </ligand>
</feature>
<feature type="binding site" evidence="1">
    <location>
        <position position="158"/>
    </location>
    <ligand>
        <name>Mg(2+)</name>
        <dbReference type="ChEBI" id="CHEBI:18420"/>
    </ligand>
</feature>
<feature type="binding site" evidence="1">
    <location>
        <position position="200"/>
    </location>
    <ligand>
        <name>Mg(2+)</name>
        <dbReference type="ChEBI" id="CHEBI:18420"/>
    </ligand>
</feature>
<sequence>MLTTEKLVETLKLDLIAGEEGLSKPIKNADISRPGLEMAGYFSHYASDRIQLLGTTELSFYNLLPDKDRAGRMRKLCRPETPAIIVTRGLQPPEELVEAAKELNTPLIVAKDATTSLMSRLTTFLEHALAKTTSLHGVLVDVYGVGVLITGDSGIGKSETALELVKRGHRLVADDNVEIRQINKDELIGKPPKLIEHLLEIRGLGIINVMTLFGAGSILTEKRIRLNINLENWNKQKLYDRVGLNEETLSILDTEITKKTIPVRPGRNVAVIIEVAAMNYRLNIMGINTAEEFSERLNEEIIKNSHKSEE</sequence>
<evidence type="ECO:0000255" key="1">
    <source>
        <dbReference type="HAMAP-Rule" id="MF_01249"/>
    </source>
</evidence>
<dbReference type="EC" id="2.7.11.-" evidence="1"/>
<dbReference type="EC" id="2.7.4.-" evidence="1"/>
<dbReference type="EMBL" id="BA000018">
    <property type="protein sequence ID" value="BAB41948.1"/>
    <property type="molecule type" value="Genomic_DNA"/>
</dbReference>
<dbReference type="PIR" id="A89849">
    <property type="entry name" value="A89849"/>
</dbReference>
<dbReference type="RefSeq" id="WP_000958224.1">
    <property type="nucleotide sequence ID" value="NC_002745.2"/>
</dbReference>
<dbReference type="SMR" id="P60701"/>
<dbReference type="EnsemblBacteria" id="BAB41948">
    <property type="protein sequence ID" value="BAB41948"/>
    <property type="gene ID" value="BAB41948"/>
</dbReference>
<dbReference type="KEGG" id="sau:SA0715"/>
<dbReference type="HOGENOM" id="CLU_052030_0_1_9"/>
<dbReference type="GO" id="GO:0005524">
    <property type="term" value="F:ATP binding"/>
    <property type="evidence" value="ECO:0007669"/>
    <property type="project" value="UniProtKB-UniRule"/>
</dbReference>
<dbReference type="GO" id="GO:0000287">
    <property type="term" value="F:magnesium ion binding"/>
    <property type="evidence" value="ECO:0007669"/>
    <property type="project" value="UniProtKB-UniRule"/>
</dbReference>
<dbReference type="GO" id="GO:0000155">
    <property type="term" value="F:phosphorelay sensor kinase activity"/>
    <property type="evidence" value="ECO:0007669"/>
    <property type="project" value="InterPro"/>
</dbReference>
<dbReference type="GO" id="GO:0004674">
    <property type="term" value="F:protein serine/threonine kinase activity"/>
    <property type="evidence" value="ECO:0007669"/>
    <property type="project" value="UniProtKB-KW"/>
</dbReference>
<dbReference type="GO" id="GO:0004712">
    <property type="term" value="F:protein serine/threonine/tyrosine kinase activity"/>
    <property type="evidence" value="ECO:0007669"/>
    <property type="project" value="UniProtKB-UniRule"/>
</dbReference>
<dbReference type="GO" id="GO:0006109">
    <property type="term" value="P:regulation of carbohydrate metabolic process"/>
    <property type="evidence" value="ECO:0007669"/>
    <property type="project" value="UniProtKB-UniRule"/>
</dbReference>
<dbReference type="CDD" id="cd01918">
    <property type="entry name" value="HprK_C"/>
    <property type="match status" value="1"/>
</dbReference>
<dbReference type="FunFam" id="3.40.1390.20:FF:000002">
    <property type="entry name" value="HPr kinase/phosphorylase"/>
    <property type="match status" value="1"/>
</dbReference>
<dbReference type="FunFam" id="3.40.50.300:FF:000174">
    <property type="entry name" value="HPr kinase/phosphorylase"/>
    <property type="match status" value="1"/>
</dbReference>
<dbReference type="Gene3D" id="3.40.1390.20">
    <property type="entry name" value="HprK N-terminal domain-like"/>
    <property type="match status" value="1"/>
</dbReference>
<dbReference type="Gene3D" id="3.40.50.300">
    <property type="entry name" value="P-loop containing nucleotide triphosphate hydrolases"/>
    <property type="match status" value="1"/>
</dbReference>
<dbReference type="HAMAP" id="MF_01249">
    <property type="entry name" value="HPr_kinase"/>
    <property type="match status" value="1"/>
</dbReference>
<dbReference type="InterPro" id="IPR003755">
    <property type="entry name" value="HPr(Ser)_kin/Pase"/>
</dbReference>
<dbReference type="InterPro" id="IPR011104">
    <property type="entry name" value="Hpr_kin/Pase_C"/>
</dbReference>
<dbReference type="InterPro" id="IPR011126">
    <property type="entry name" value="Hpr_kin/Pase_Hpr_N"/>
</dbReference>
<dbReference type="InterPro" id="IPR027417">
    <property type="entry name" value="P-loop_NTPase"/>
</dbReference>
<dbReference type="InterPro" id="IPR028979">
    <property type="entry name" value="Ser_kin/Pase_Hpr-like_N_sf"/>
</dbReference>
<dbReference type="NCBIfam" id="TIGR00679">
    <property type="entry name" value="hpr-ser"/>
    <property type="match status" value="1"/>
</dbReference>
<dbReference type="PANTHER" id="PTHR30305:SF1">
    <property type="entry name" value="HPR KINASE_PHOSPHORYLASE"/>
    <property type="match status" value="1"/>
</dbReference>
<dbReference type="PANTHER" id="PTHR30305">
    <property type="entry name" value="PROTEIN YJDM-RELATED"/>
    <property type="match status" value="1"/>
</dbReference>
<dbReference type="Pfam" id="PF07475">
    <property type="entry name" value="Hpr_kinase_C"/>
    <property type="match status" value="1"/>
</dbReference>
<dbReference type="Pfam" id="PF02603">
    <property type="entry name" value="Hpr_kinase_N"/>
    <property type="match status" value="1"/>
</dbReference>
<dbReference type="SUPFAM" id="SSF75138">
    <property type="entry name" value="HprK N-terminal domain-like"/>
    <property type="match status" value="1"/>
</dbReference>
<dbReference type="SUPFAM" id="SSF53795">
    <property type="entry name" value="PEP carboxykinase-like"/>
    <property type="match status" value="1"/>
</dbReference>
<keyword id="KW-0067">ATP-binding</keyword>
<keyword id="KW-0119">Carbohydrate metabolism</keyword>
<keyword id="KW-0418">Kinase</keyword>
<keyword id="KW-0460">Magnesium</keyword>
<keyword id="KW-0479">Metal-binding</keyword>
<keyword id="KW-0511">Multifunctional enzyme</keyword>
<keyword id="KW-0547">Nucleotide-binding</keyword>
<keyword id="KW-0723">Serine/threonine-protein kinase</keyword>
<keyword id="KW-0808">Transferase</keyword>
<reference key="1">
    <citation type="journal article" date="2001" name="Lancet">
        <title>Whole genome sequencing of meticillin-resistant Staphylococcus aureus.</title>
        <authorList>
            <person name="Kuroda M."/>
            <person name="Ohta T."/>
            <person name="Uchiyama I."/>
            <person name="Baba T."/>
            <person name="Yuzawa H."/>
            <person name="Kobayashi I."/>
            <person name="Cui L."/>
            <person name="Oguchi A."/>
            <person name="Aoki K."/>
            <person name="Nagai Y."/>
            <person name="Lian J.-Q."/>
            <person name="Ito T."/>
            <person name="Kanamori M."/>
            <person name="Matsumaru H."/>
            <person name="Maruyama A."/>
            <person name="Murakami H."/>
            <person name="Hosoyama A."/>
            <person name="Mizutani-Ui Y."/>
            <person name="Takahashi N.K."/>
            <person name="Sawano T."/>
            <person name="Inoue R."/>
            <person name="Kaito C."/>
            <person name="Sekimizu K."/>
            <person name="Hirakawa H."/>
            <person name="Kuhara S."/>
            <person name="Goto S."/>
            <person name="Yabuzaki J."/>
            <person name="Kanehisa M."/>
            <person name="Yamashita A."/>
            <person name="Oshima K."/>
            <person name="Furuya K."/>
            <person name="Yoshino C."/>
            <person name="Shiba T."/>
            <person name="Hattori M."/>
            <person name="Ogasawara N."/>
            <person name="Hayashi H."/>
            <person name="Hiramatsu K."/>
        </authorList>
    </citation>
    <scope>NUCLEOTIDE SEQUENCE [LARGE SCALE GENOMIC DNA]</scope>
    <source>
        <strain>N315</strain>
    </source>
</reference>
<reference key="2">
    <citation type="submission" date="2007-10" db="UniProtKB">
        <title>Shotgun proteomic analysis of total and membrane protein extracts of S. aureus strain N315.</title>
        <authorList>
            <person name="Vaezzadeh A.R."/>
            <person name="Deshusses J."/>
            <person name="Lescuyer P."/>
            <person name="Hochstrasser D.F."/>
        </authorList>
    </citation>
    <scope>IDENTIFICATION BY MASS SPECTROMETRY [LARGE SCALE ANALYSIS]</scope>
    <source>
        <strain>N315</strain>
    </source>
</reference>
<organism>
    <name type="scientific">Staphylococcus aureus (strain N315)</name>
    <dbReference type="NCBI Taxonomy" id="158879"/>
    <lineage>
        <taxon>Bacteria</taxon>
        <taxon>Bacillati</taxon>
        <taxon>Bacillota</taxon>
        <taxon>Bacilli</taxon>
        <taxon>Bacillales</taxon>
        <taxon>Staphylococcaceae</taxon>
        <taxon>Staphylococcus</taxon>
    </lineage>
</organism>
<gene>
    <name evidence="1" type="primary">hprK</name>
    <name type="ordered locus">SA0715</name>
</gene>
<comment type="function">
    <text evidence="1">Catalyzes the ATP- as well as the pyrophosphate-dependent phosphorylation of a specific serine residue in HPr, a phosphocarrier protein of the phosphoenolpyruvate-dependent sugar phosphotransferase system (PTS). HprK/P also catalyzes the pyrophosphate-producing, inorganic phosphate-dependent dephosphorylation (phosphorolysis) of seryl-phosphorylated HPr (P-Ser-HPr). The two antagonistic activities of HprK/P are regulated by several intracellular metabolites, which change their concentration in response to the absence or presence of rapidly metabolisable carbon sources (glucose, fructose, etc.) in the growth medium. Therefore, by controlling the phosphorylation state of HPr, HPrK/P is a sensor enzyme that plays a major role in the regulation of carbon metabolism and sugar transport: it mediates carbon catabolite repression (CCR), and regulates PTS-catalyzed carbohydrate uptake and inducer exclusion.</text>
</comment>
<comment type="catalytic activity">
    <reaction evidence="1">
        <text>[HPr protein]-L-serine + ATP = [HPr protein]-O-phospho-L-serine + ADP + H(+)</text>
        <dbReference type="Rhea" id="RHEA:46600"/>
        <dbReference type="Rhea" id="RHEA-COMP:11602"/>
        <dbReference type="Rhea" id="RHEA-COMP:11603"/>
        <dbReference type="ChEBI" id="CHEBI:15378"/>
        <dbReference type="ChEBI" id="CHEBI:29999"/>
        <dbReference type="ChEBI" id="CHEBI:30616"/>
        <dbReference type="ChEBI" id="CHEBI:83421"/>
        <dbReference type="ChEBI" id="CHEBI:456216"/>
    </reaction>
</comment>
<comment type="catalytic activity">
    <reaction evidence="1">
        <text>[HPr protein]-O-phospho-L-serine + phosphate + H(+) = [HPr protein]-L-serine + diphosphate</text>
        <dbReference type="Rhea" id="RHEA:46604"/>
        <dbReference type="Rhea" id="RHEA-COMP:11602"/>
        <dbReference type="Rhea" id="RHEA-COMP:11603"/>
        <dbReference type="ChEBI" id="CHEBI:15378"/>
        <dbReference type="ChEBI" id="CHEBI:29999"/>
        <dbReference type="ChEBI" id="CHEBI:33019"/>
        <dbReference type="ChEBI" id="CHEBI:43474"/>
        <dbReference type="ChEBI" id="CHEBI:83421"/>
    </reaction>
</comment>
<comment type="cofactor">
    <cofactor evidence="1">
        <name>Mg(2+)</name>
        <dbReference type="ChEBI" id="CHEBI:18420"/>
    </cofactor>
</comment>
<comment type="subunit">
    <text evidence="1">Homohexamer.</text>
</comment>
<comment type="domain">
    <text evidence="1">The Walker A ATP-binding motif also binds Pi and PPi.</text>
</comment>
<comment type="miscellaneous">
    <text evidence="1">Both phosphorylation and phosphorolysis are carried out by the same active site and suggest a common mechanism for both reactions.</text>
</comment>
<comment type="similarity">
    <text evidence="1">Belongs to the HPrK/P family.</text>
</comment>
<name>HPRK_STAAN</name>
<proteinExistence type="evidence at protein level"/>
<accession>P60701</accession>
<accession>Q99VL5</accession>